<feature type="chain" id="PRO_0000137555" description="Inorganic pyrophosphatase">
    <location>
        <begin position="1"/>
        <end position="178"/>
    </location>
</feature>
<feature type="binding site" evidence="1">
    <location>
        <position position="30"/>
    </location>
    <ligand>
        <name>substrate</name>
    </ligand>
</feature>
<feature type="binding site" evidence="1">
    <location>
        <position position="44"/>
    </location>
    <ligand>
        <name>substrate</name>
    </ligand>
</feature>
<feature type="binding site" evidence="1">
    <location>
        <position position="56"/>
    </location>
    <ligand>
        <name>substrate</name>
    </ligand>
</feature>
<feature type="binding site" evidence="1">
    <location>
        <position position="66"/>
    </location>
    <ligand>
        <name>Mg(2+)</name>
        <dbReference type="ChEBI" id="CHEBI:18420"/>
        <label>1</label>
    </ligand>
</feature>
<feature type="binding site" evidence="1">
    <location>
        <position position="71"/>
    </location>
    <ligand>
        <name>Mg(2+)</name>
        <dbReference type="ChEBI" id="CHEBI:18420"/>
        <label>1</label>
    </ligand>
</feature>
<feature type="binding site" evidence="1">
    <location>
        <position position="71"/>
    </location>
    <ligand>
        <name>Mg(2+)</name>
        <dbReference type="ChEBI" id="CHEBI:18420"/>
        <label>2</label>
    </ligand>
</feature>
<feature type="binding site" evidence="1">
    <location>
        <position position="103"/>
    </location>
    <ligand>
        <name>Mg(2+)</name>
        <dbReference type="ChEBI" id="CHEBI:18420"/>
        <label>1</label>
    </ligand>
</feature>
<feature type="binding site" evidence="1">
    <location>
        <position position="140"/>
    </location>
    <ligand>
        <name>substrate</name>
    </ligand>
</feature>
<evidence type="ECO:0000255" key="1">
    <source>
        <dbReference type="HAMAP-Rule" id="MF_00209"/>
    </source>
</evidence>
<name>IPYR_PYRAB</name>
<keyword id="KW-0963">Cytoplasm</keyword>
<keyword id="KW-0378">Hydrolase</keyword>
<keyword id="KW-0460">Magnesium</keyword>
<keyword id="KW-0479">Metal-binding</keyword>
<protein>
    <recommendedName>
        <fullName evidence="1">Inorganic pyrophosphatase</fullName>
        <ecNumber evidence="1">3.6.1.1</ecNumber>
    </recommendedName>
    <alternativeName>
        <fullName evidence="1">Pyrophosphate phospho-hydrolase</fullName>
        <shortName evidence="1">PPase</shortName>
    </alternativeName>
</protein>
<dbReference type="EC" id="3.6.1.1" evidence="1"/>
<dbReference type="EMBL" id="AJ248288">
    <property type="protein sequence ID" value="CAB50588.1"/>
    <property type="molecule type" value="Genomic_DNA"/>
</dbReference>
<dbReference type="EMBL" id="HE613800">
    <property type="protein sequence ID" value="CCE71152.1"/>
    <property type="molecule type" value="Genomic_DNA"/>
</dbReference>
<dbReference type="PIR" id="F75018">
    <property type="entry name" value="F75018"/>
</dbReference>
<dbReference type="RefSeq" id="WP_010868802.1">
    <property type="nucleotide sequence ID" value="NC_000868.1"/>
</dbReference>
<dbReference type="SMR" id="Q9UY24"/>
<dbReference type="STRING" id="272844.PAB1104"/>
<dbReference type="KEGG" id="pab:PAB1104"/>
<dbReference type="PATRIC" id="fig|272844.11.peg.1798"/>
<dbReference type="eggNOG" id="arCOG01711">
    <property type="taxonomic scope" value="Archaea"/>
</dbReference>
<dbReference type="HOGENOM" id="CLU_073198_1_2_2"/>
<dbReference type="OrthoDB" id="134160at2157"/>
<dbReference type="PhylomeDB" id="Q9UY24"/>
<dbReference type="Proteomes" id="UP000000810">
    <property type="component" value="Chromosome"/>
</dbReference>
<dbReference type="Proteomes" id="UP000009139">
    <property type="component" value="Chromosome"/>
</dbReference>
<dbReference type="GO" id="GO:0005737">
    <property type="term" value="C:cytoplasm"/>
    <property type="evidence" value="ECO:0007669"/>
    <property type="project" value="UniProtKB-SubCell"/>
</dbReference>
<dbReference type="GO" id="GO:0004427">
    <property type="term" value="F:inorganic diphosphate phosphatase activity"/>
    <property type="evidence" value="ECO:0007669"/>
    <property type="project" value="UniProtKB-UniRule"/>
</dbReference>
<dbReference type="GO" id="GO:0000287">
    <property type="term" value="F:magnesium ion binding"/>
    <property type="evidence" value="ECO:0007669"/>
    <property type="project" value="UniProtKB-UniRule"/>
</dbReference>
<dbReference type="GO" id="GO:0006796">
    <property type="term" value="P:phosphate-containing compound metabolic process"/>
    <property type="evidence" value="ECO:0007669"/>
    <property type="project" value="InterPro"/>
</dbReference>
<dbReference type="CDD" id="cd00412">
    <property type="entry name" value="pyrophosphatase"/>
    <property type="match status" value="1"/>
</dbReference>
<dbReference type="FunFam" id="3.90.80.10:FF:000003">
    <property type="entry name" value="Inorganic pyrophosphatase"/>
    <property type="match status" value="1"/>
</dbReference>
<dbReference type="Gene3D" id="3.90.80.10">
    <property type="entry name" value="Inorganic pyrophosphatase"/>
    <property type="match status" value="1"/>
</dbReference>
<dbReference type="HAMAP" id="MF_00209">
    <property type="entry name" value="Inorganic_PPase"/>
    <property type="match status" value="1"/>
</dbReference>
<dbReference type="InterPro" id="IPR008162">
    <property type="entry name" value="Pyrophosphatase"/>
</dbReference>
<dbReference type="InterPro" id="IPR036649">
    <property type="entry name" value="Pyrophosphatase_sf"/>
</dbReference>
<dbReference type="PANTHER" id="PTHR10286">
    <property type="entry name" value="INORGANIC PYROPHOSPHATASE"/>
    <property type="match status" value="1"/>
</dbReference>
<dbReference type="Pfam" id="PF00719">
    <property type="entry name" value="Pyrophosphatase"/>
    <property type="match status" value="1"/>
</dbReference>
<dbReference type="SUPFAM" id="SSF50324">
    <property type="entry name" value="Inorganic pyrophosphatase"/>
    <property type="match status" value="1"/>
</dbReference>
<dbReference type="PROSITE" id="PS00387">
    <property type="entry name" value="PPASE"/>
    <property type="match status" value="1"/>
</dbReference>
<comment type="function">
    <text evidence="1">Catalyzes the hydrolysis of inorganic pyrophosphate (PPi) forming two phosphate ions.</text>
</comment>
<comment type="catalytic activity">
    <reaction evidence="1">
        <text>diphosphate + H2O = 2 phosphate + H(+)</text>
        <dbReference type="Rhea" id="RHEA:24576"/>
        <dbReference type="ChEBI" id="CHEBI:15377"/>
        <dbReference type="ChEBI" id="CHEBI:15378"/>
        <dbReference type="ChEBI" id="CHEBI:33019"/>
        <dbReference type="ChEBI" id="CHEBI:43474"/>
        <dbReference type="EC" id="3.6.1.1"/>
    </reaction>
</comment>
<comment type="cofactor">
    <cofactor evidence="1">
        <name>Mg(2+)</name>
        <dbReference type="ChEBI" id="CHEBI:18420"/>
    </cofactor>
</comment>
<comment type="subunit">
    <text evidence="1">Homohexamer.</text>
</comment>
<comment type="subcellular location">
    <subcellularLocation>
        <location evidence="1">Cytoplasm</location>
    </subcellularLocation>
</comment>
<comment type="similarity">
    <text evidence="1">Belongs to the PPase family.</text>
</comment>
<organism>
    <name type="scientific">Pyrococcus abyssi (strain GE5 / Orsay)</name>
    <dbReference type="NCBI Taxonomy" id="272844"/>
    <lineage>
        <taxon>Archaea</taxon>
        <taxon>Methanobacteriati</taxon>
        <taxon>Methanobacteriota</taxon>
        <taxon>Thermococci</taxon>
        <taxon>Thermococcales</taxon>
        <taxon>Thermococcaceae</taxon>
        <taxon>Pyrococcus</taxon>
    </lineage>
</organism>
<proteinExistence type="inferred from homology"/>
<gene>
    <name evidence="1" type="primary">ppa</name>
    <name type="ordered locus">PYRAB16840</name>
    <name type="ORF">PAB1104</name>
</gene>
<accession>Q9UY24</accession>
<accession>G8ZK45</accession>
<sequence length="178" mass="20841">MNPFHDLEPGPNVPEVVYALIEIPKGSRNKYELDKKTGLLKLDRVLYSPFFYPVDYGIIPRTWYDDDDPFDIMVIMREPTYPLTIIEARPIGLFKMIDSGDKDYKVLAVPVEDPYFKDWKDIDDVPKAFLDEIAHFFKRYKELQGKEIIVEGWEGAEAAKREILRAIELYKEKFGSKE</sequence>
<reference key="1">
    <citation type="journal article" date="2003" name="Mol. Microbiol.">
        <title>An integrated analysis of the genome of the hyperthermophilic archaeon Pyrococcus abyssi.</title>
        <authorList>
            <person name="Cohen G.N."/>
            <person name="Barbe V."/>
            <person name="Flament D."/>
            <person name="Galperin M."/>
            <person name="Heilig R."/>
            <person name="Lecompte O."/>
            <person name="Poch O."/>
            <person name="Prieur D."/>
            <person name="Querellou J."/>
            <person name="Ripp R."/>
            <person name="Thierry J.-C."/>
            <person name="Van der Oost J."/>
            <person name="Weissenbach J."/>
            <person name="Zivanovic Y."/>
            <person name="Forterre P."/>
        </authorList>
    </citation>
    <scope>NUCLEOTIDE SEQUENCE [LARGE SCALE GENOMIC DNA]</scope>
    <source>
        <strain>GE5 / Orsay</strain>
    </source>
</reference>
<reference key="2">
    <citation type="journal article" date="2012" name="Curr. Microbiol.">
        <title>Re-annotation of two hyperthermophilic archaea Pyrococcus abyssi GE5 and Pyrococcus furiosus DSM 3638.</title>
        <authorList>
            <person name="Gao J."/>
            <person name="Wang J."/>
        </authorList>
    </citation>
    <scope>GENOME REANNOTATION</scope>
    <source>
        <strain>GE5 / Orsay</strain>
    </source>
</reference>